<sequence>MDATANPKAGQLTIVGSGIASINHMTLQAVACIETADVVCYVVADGATEAFIRKKNENCIDLYPLYSETKERTDTYIQMAEFMLNHVRAGKNVVGVFYGHPGVFVCPTHRAIYIARNEGYRAVMLPGLSAEDCLYADLGIDPSTVGCITYEATDMLVYNRPLNSSSHLVLYQVGIVGKADFKFAYDPKENHHFGKLIDRLELEYGPDHTVVHYIAPIFPTEEPVMERFTIGQLKLKENSDKIATISTFYLPPKAPSAKVSLNREFLRSLNIADSRDPMTPFPWNPTAAPYGEREKKVILELESHVPPPGYRPLKKNSGLAQALEKLSLDTRALAAWKTDRKAYADSVSGLTDDERDALASGKHAQLSGALKEGGVPMNHAQLTFFFIISNL</sequence>
<name>CMAMA_COPMA</name>
<keyword id="KW-0488">Methylation</keyword>
<keyword id="KW-0489">Methyltransferase</keyword>
<keyword id="KW-1185">Reference proteome</keyword>
<keyword id="KW-0949">S-adenosyl-L-methionine</keyword>
<keyword id="KW-0808">Transferase</keyword>
<comment type="function">
    <text evidence="1 2">Fusion protein of the methyltransferase cmaM and a type I borosin core peptide; part of the gene cluster that mediates the biosynthesis of a type I borosin, a highly methylated cyclic peptide with potent biological activities (PubMed:31117659). Type I borosins derive from the C-terminus of the fusion protein, and it is the same protein that methylates its own C-terminus using S-adenosyl methionine (SAM) (PubMed:31117659). The C-terminus is subsequently cleaved off and macrocyclized by a prolyloligopeptidase to give the final product (By similarity).</text>
</comment>
<comment type="pathway">
    <text evidence="5">Secondary metabolite biosynthesis.</text>
</comment>
<comment type="subunit">
    <text evidence="2">Homodimer.</text>
</comment>
<comment type="domain">
    <text evidence="5">Within the homodimer, the clasp domain wraps around the adjacent subunit to position the core peptide into the other subunit's active site for iterative intermolecular methylation.</text>
</comment>
<comment type="PTM">
    <text evidence="2 4">CmaMA automethylates at Leu-382, Phe-385, Phe-386, Ile-387 and Ile-388 before being processed by the prolyloligopeptidase ledP which likely forms a peptidyl ester upon removal of the follower propeptide, which then undergoes macrocyclization with the N-terminus of the modified core peptide (PubMed:31117659). Peptide backbone alpha-N-methylations change the physicochemical properties of amide bonds to provide structural constraints and other favorable characteristics including biological membrane permeability to peptides (Probable).</text>
</comment>
<comment type="similarity">
    <text evidence="4">In the N-terminal section; belongs to the precorrin methyltransferase family.</text>
</comment>
<dbReference type="EC" id="2.1.1.-" evidence="2"/>
<dbReference type="EMBL" id="ML210213">
    <property type="protein sequence ID" value="TFK23735.1"/>
    <property type="molecule type" value="Genomic_DNA"/>
</dbReference>
<dbReference type="SMR" id="A0A5C3KU62"/>
<dbReference type="STRING" id="230819.A0A5C3KU62"/>
<dbReference type="iPTMnet" id="A0A5C3KU62"/>
<dbReference type="OrthoDB" id="4623364at2759"/>
<dbReference type="Proteomes" id="UP000307440">
    <property type="component" value="Unassembled WGS sequence"/>
</dbReference>
<dbReference type="GO" id="GO:0008168">
    <property type="term" value="F:methyltransferase activity"/>
    <property type="evidence" value="ECO:0007669"/>
    <property type="project" value="UniProtKB-KW"/>
</dbReference>
<dbReference type="GO" id="GO:0032259">
    <property type="term" value="P:methylation"/>
    <property type="evidence" value="ECO:0007669"/>
    <property type="project" value="UniProtKB-KW"/>
</dbReference>
<dbReference type="CDD" id="cd19916">
    <property type="entry name" value="OphMA_like"/>
    <property type="match status" value="1"/>
</dbReference>
<dbReference type="Gene3D" id="3.40.1010.10">
    <property type="entry name" value="Cobalt-precorrin-4 Transmethylase, Domain 1"/>
    <property type="match status" value="1"/>
</dbReference>
<dbReference type="InterPro" id="IPR000878">
    <property type="entry name" value="4pyrrol_Mease"/>
</dbReference>
<dbReference type="InterPro" id="IPR035996">
    <property type="entry name" value="4pyrrol_Methylase_sf"/>
</dbReference>
<dbReference type="InterPro" id="IPR014777">
    <property type="entry name" value="4pyrrole_Mease_sub1"/>
</dbReference>
<dbReference type="Pfam" id="PF00590">
    <property type="entry name" value="TP_methylase"/>
    <property type="match status" value="1"/>
</dbReference>
<dbReference type="SUPFAM" id="SSF53790">
    <property type="entry name" value="Tetrapyrrole methylase"/>
    <property type="match status" value="1"/>
</dbReference>
<accession>A0A5C3KU62</accession>
<evidence type="ECO:0000250" key="1">
    <source>
        <dbReference type="UniProtKB" id="A0A2R2JFI5"/>
    </source>
</evidence>
<evidence type="ECO:0000269" key="2">
    <source>
    </source>
</evidence>
<evidence type="ECO:0000303" key="3">
    <source>
    </source>
</evidence>
<evidence type="ECO:0000305" key="4"/>
<evidence type="ECO:0000305" key="5">
    <source>
    </source>
</evidence>
<proteinExistence type="evidence at protein level"/>
<protein>
    <recommendedName>
        <fullName evidence="3">Methyltransferase/ribosomally synthesized type I borosin cyclic peptide precursor cmaMA</fullName>
    </recommendedName>
    <alternativeName>
        <fullName evidence="3">Type I borosin cyclic peptide biosynthesis cluster protein MA</fullName>
    </alternativeName>
    <component>
        <recommendedName>
            <fullName evidence="3">N-methyltranferase cmaM</fullName>
            <ecNumber evidence="2">2.1.1.-</ecNumber>
        </recommendedName>
    </component>
    <component>
        <recommendedName>
            <fullName evidence="3">Ribosomally synthesized type I borosin core peptide</fullName>
        </recommendedName>
    </component>
</protein>
<organism>
    <name type="scientific">Coprinopsis marcescibilis</name>
    <name type="common">Agaric fungus</name>
    <name type="synonym">Psathyrella marcescibilis</name>
    <dbReference type="NCBI Taxonomy" id="230819"/>
    <lineage>
        <taxon>Eukaryota</taxon>
        <taxon>Fungi</taxon>
        <taxon>Dikarya</taxon>
        <taxon>Basidiomycota</taxon>
        <taxon>Agaricomycotina</taxon>
        <taxon>Agaricomycetes</taxon>
        <taxon>Agaricomycetidae</taxon>
        <taxon>Agaricales</taxon>
        <taxon>Agaricineae</taxon>
        <taxon>Psathyrellaceae</taxon>
        <taxon>Coprinopsis</taxon>
    </lineage>
</organism>
<reference key="1">
    <citation type="journal article" date="2019" name="Nat. Ecol. Evol.">
        <title>Megaphylogeny resolves global patterns of mushroom evolution.</title>
        <authorList>
            <person name="Varga T."/>
            <person name="Krizsan K."/>
            <person name="Foeldi C."/>
            <person name="Dima B."/>
            <person name="Sanchez-Garcia M."/>
            <person name="Sanchez-Ramirez S."/>
            <person name="Szoellosi G.J."/>
            <person name="Szarkandi J.G."/>
            <person name="Papp V."/>
            <person name="Albert L."/>
            <person name="Andreopoulos W."/>
            <person name="Angelini C."/>
            <person name="Antonin V."/>
            <person name="Barry K.W."/>
            <person name="Bougher N.L."/>
            <person name="Buchanan P."/>
            <person name="Buyck B."/>
            <person name="Bense V."/>
            <person name="Catcheside P."/>
            <person name="Chovatia M."/>
            <person name="Cooper J."/>
            <person name="Daemon W."/>
            <person name="Desjardin D."/>
            <person name="Finy P."/>
            <person name="Geml J."/>
            <person name="Haridas S."/>
            <person name="Hughes K."/>
            <person name="Justo A."/>
            <person name="Karasinski D."/>
            <person name="Kautmanova I."/>
            <person name="Kiss B."/>
            <person name="Kocsube S."/>
            <person name="Kotiranta H."/>
            <person name="LaButti K.M."/>
            <person name="Lechner B.E."/>
            <person name="Liimatainen K."/>
            <person name="Lipzen A."/>
            <person name="Lukacs Z."/>
            <person name="Mihaltcheva S."/>
            <person name="Morgado L.N."/>
            <person name="Niskanen T."/>
            <person name="Noordeloos M.E."/>
            <person name="Ohm R.A."/>
            <person name="Ortiz-Santana B."/>
            <person name="Ovrebo C."/>
            <person name="Racz N."/>
            <person name="Riley R."/>
            <person name="Savchenko A."/>
            <person name="Shiryaev A."/>
            <person name="Soop K."/>
            <person name="Spirin V."/>
            <person name="Szebenyi C."/>
            <person name="Tomsovsky M."/>
            <person name="Tulloss R.E."/>
            <person name="Uehling J."/>
            <person name="Grigoriev I.V."/>
            <person name="Vagvoelgyi C."/>
            <person name="Papp T."/>
            <person name="Martin F.M."/>
            <person name="Miettinen O."/>
            <person name="Hibbett D.S."/>
            <person name="Nagy L.G."/>
        </authorList>
    </citation>
    <scope>NUCLEOTIDE SEQUENCE [LARGE SCALE GENOMIC DNA]</scope>
    <source>
        <strain>CBS 121175</strain>
    </source>
</reference>
<reference key="2">
    <citation type="journal article" date="2019" name="J. Am. Chem. Soc.">
        <title>Distinct autocatalytic alpha-N-methylating precursors expand the borosin RiPP family of peptide natural products.</title>
        <authorList>
            <person name="Quijano M.R."/>
            <person name="Zach C."/>
            <person name="Miller F.S."/>
            <person name="Lee A.R."/>
            <person name="Imani A.S."/>
            <person name="Kuenzler M."/>
            <person name="Freeman M.F."/>
        </authorList>
    </citation>
    <scope>FUNCTION</scope>
    <scope>SUBUNIT</scope>
    <scope>CATALYTIC ACTIVITY</scope>
    <scope>DOMAIN</scope>
    <scope>METHYLATION AT LEU-382; PHE-385; PHE-386; ILE-387 AND ILE-388</scope>
</reference>
<feature type="chain" id="PRO_0000458510" description="N-methyltranferase cmaM" evidence="5">
    <location>
        <begin position="1"/>
        <end position="376"/>
    </location>
</feature>
<feature type="peptide" id="PRO_0000458511" description="Ribosomally synthesized type I borosin core peptide" evidence="5">
    <location>
        <begin position="377"/>
        <end position="391"/>
    </location>
</feature>
<feature type="region of interest" description="Methyltransferase domain" evidence="1">
    <location>
        <begin position="1"/>
        <end position="253"/>
    </location>
</feature>
<feature type="region of interest" description="Clasp domain" evidence="1">
    <location>
        <begin position="254"/>
        <end position="373"/>
    </location>
</feature>
<feature type="region of interest" description="Precursor leader" evidence="1">
    <location>
        <begin position="374"/>
        <end position="376"/>
    </location>
</feature>
<feature type="active site" evidence="1">
    <location>
        <position position="72"/>
    </location>
</feature>
<feature type="active site" evidence="1">
    <location>
        <position position="76"/>
    </location>
</feature>
<feature type="active site" evidence="1">
    <location>
        <position position="98"/>
    </location>
</feature>
<feature type="binding site" evidence="1">
    <location>
        <position position="98"/>
    </location>
    <ligand>
        <name>S-adenosyl-L-methionine</name>
        <dbReference type="ChEBI" id="CHEBI:59789"/>
    </ligand>
</feature>
<feature type="binding site" evidence="1">
    <location>
        <position position="100"/>
    </location>
    <ligand>
        <name>S-adenosyl-L-methionine</name>
        <dbReference type="ChEBI" id="CHEBI:59789"/>
    </ligand>
</feature>
<feature type="binding site" evidence="1">
    <location>
        <position position="103"/>
    </location>
    <ligand>
        <name>S-adenosyl-L-methionine</name>
        <dbReference type="ChEBI" id="CHEBI:59789"/>
    </ligand>
</feature>
<feature type="binding site" evidence="1">
    <location>
        <position position="130"/>
    </location>
    <ligand>
        <name>S-adenosyl-L-methionine</name>
        <dbReference type="ChEBI" id="CHEBI:59789"/>
    </ligand>
</feature>
<feature type="binding site" evidence="1">
    <location>
        <position position="172"/>
    </location>
    <ligand>
        <name>S-adenosyl-L-methionine</name>
        <dbReference type="ChEBI" id="CHEBI:59789"/>
    </ligand>
</feature>
<feature type="binding site" evidence="1">
    <location>
        <position position="215"/>
    </location>
    <ligand>
        <name>S-adenosyl-L-methionine</name>
        <dbReference type="ChEBI" id="CHEBI:59789"/>
    </ligand>
</feature>
<feature type="binding site" evidence="1">
    <location>
        <position position="246"/>
    </location>
    <ligand>
        <name>S-adenosyl-L-methionine</name>
        <dbReference type="ChEBI" id="CHEBI:59789"/>
    </ligand>
</feature>
<feature type="binding site" evidence="1">
    <location>
        <position position="247"/>
    </location>
    <ligand>
        <name>S-adenosyl-L-methionine</name>
        <dbReference type="ChEBI" id="CHEBI:59789"/>
    </ligand>
</feature>
<feature type="modified residue" description="N-methylleucine" evidence="2">
    <location>
        <position position="382"/>
    </location>
</feature>
<feature type="modified residue" description="N-methylphenylalanine" evidence="2">
    <location>
        <position position="385"/>
    </location>
</feature>
<feature type="modified residue" description="N-methylphenylalanine" evidence="2">
    <location>
        <position position="386"/>
    </location>
</feature>
<feature type="modified residue" description="N-methylisoleucine" evidence="2">
    <location>
        <position position="387"/>
    </location>
</feature>
<feature type="modified residue" description="N-methylisoleucine" evidence="2">
    <location>
        <position position="388"/>
    </location>
</feature>
<gene>
    <name evidence="3" type="primary">cmaMA</name>
    <name type="ORF">FA15DRAFT_670214</name>
</gene>